<dbReference type="EC" id="3.4.19.3" evidence="1"/>
<dbReference type="EMBL" id="BA000033">
    <property type="protein sequence ID" value="BAB96475.1"/>
    <property type="molecule type" value="Genomic_DNA"/>
</dbReference>
<dbReference type="RefSeq" id="WP_000547833.1">
    <property type="nucleotide sequence ID" value="NC_003923.1"/>
</dbReference>
<dbReference type="SMR" id="Q8NUH2"/>
<dbReference type="MEROPS" id="C15.001"/>
<dbReference type="KEGG" id="sam:MW2610"/>
<dbReference type="HOGENOM" id="CLU_043960_4_0_9"/>
<dbReference type="GO" id="GO:0005829">
    <property type="term" value="C:cytosol"/>
    <property type="evidence" value="ECO:0007669"/>
    <property type="project" value="InterPro"/>
</dbReference>
<dbReference type="GO" id="GO:0016920">
    <property type="term" value="F:pyroglutamyl-peptidase activity"/>
    <property type="evidence" value="ECO:0007669"/>
    <property type="project" value="UniProtKB-UniRule"/>
</dbReference>
<dbReference type="GO" id="GO:0006508">
    <property type="term" value="P:proteolysis"/>
    <property type="evidence" value="ECO:0007669"/>
    <property type="project" value="UniProtKB-KW"/>
</dbReference>
<dbReference type="CDD" id="cd00501">
    <property type="entry name" value="Peptidase_C15"/>
    <property type="match status" value="1"/>
</dbReference>
<dbReference type="FunFam" id="3.40.630.20:FF:000001">
    <property type="entry name" value="Pyrrolidone-carboxylate peptidase"/>
    <property type="match status" value="1"/>
</dbReference>
<dbReference type="Gene3D" id="3.40.630.20">
    <property type="entry name" value="Peptidase C15, pyroglutamyl peptidase I-like"/>
    <property type="match status" value="1"/>
</dbReference>
<dbReference type="HAMAP" id="MF_00417">
    <property type="entry name" value="Pyrrolid_peptidase"/>
    <property type="match status" value="1"/>
</dbReference>
<dbReference type="InterPro" id="IPR000816">
    <property type="entry name" value="Peptidase_C15"/>
</dbReference>
<dbReference type="InterPro" id="IPR016125">
    <property type="entry name" value="Peptidase_C15-like"/>
</dbReference>
<dbReference type="InterPro" id="IPR036440">
    <property type="entry name" value="Peptidase_C15-like_sf"/>
</dbReference>
<dbReference type="InterPro" id="IPR029762">
    <property type="entry name" value="PGP-I_bact-type"/>
</dbReference>
<dbReference type="InterPro" id="IPR033694">
    <property type="entry name" value="PGPEP1_Cys_AS"/>
</dbReference>
<dbReference type="InterPro" id="IPR033693">
    <property type="entry name" value="PGPEP1_Glu_AS"/>
</dbReference>
<dbReference type="NCBIfam" id="NF009676">
    <property type="entry name" value="PRK13197.1"/>
    <property type="match status" value="1"/>
</dbReference>
<dbReference type="NCBIfam" id="TIGR00504">
    <property type="entry name" value="pyro_pdase"/>
    <property type="match status" value="1"/>
</dbReference>
<dbReference type="PANTHER" id="PTHR23402">
    <property type="entry name" value="PROTEASE FAMILY C15 PYROGLUTAMYL-PEPTIDASE I-RELATED"/>
    <property type="match status" value="1"/>
</dbReference>
<dbReference type="PANTHER" id="PTHR23402:SF1">
    <property type="entry name" value="PYROGLUTAMYL-PEPTIDASE I"/>
    <property type="match status" value="1"/>
</dbReference>
<dbReference type="Pfam" id="PF01470">
    <property type="entry name" value="Peptidase_C15"/>
    <property type="match status" value="1"/>
</dbReference>
<dbReference type="PIRSF" id="PIRSF015592">
    <property type="entry name" value="Prld-crbxl_pptds"/>
    <property type="match status" value="1"/>
</dbReference>
<dbReference type="PRINTS" id="PR00706">
    <property type="entry name" value="PYROGLUPTASE"/>
</dbReference>
<dbReference type="SUPFAM" id="SSF53182">
    <property type="entry name" value="Pyrrolidone carboxyl peptidase (pyroglutamate aminopeptidase)"/>
    <property type="match status" value="1"/>
</dbReference>
<dbReference type="PROSITE" id="PS01334">
    <property type="entry name" value="PYRASE_CYS"/>
    <property type="match status" value="1"/>
</dbReference>
<dbReference type="PROSITE" id="PS01333">
    <property type="entry name" value="PYRASE_GLU"/>
    <property type="match status" value="1"/>
</dbReference>
<sequence>MHILVTGFAPFDNQNINPSWEAVTQLEDIIGTHTIDKLKLPTSFKKVDNIINKTLASNHYDVVLAIGQAGGRNAITPERVAINIDDARIPDNDDFQPIDQAIHLDGAPAYFSNLPVKAMTQSIINQGLPGALSNSAGTFVCNHTLYHLGYLQDKHYPHLRFGFIHVPYIPEQVIGKPDTPSMPLEKIVAGLTAAIEAISNDEDLHLALGTTE</sequence>
<protein>
    <recommendedName>
        <fullName evidence="1">Pyrrolidone-carboxylate peptidase</fullName>
        <ecNumber evidence="1">3.4.19.3</ecNumber>
    </recommendedName>
    <alternativeName>
        <fullName evidence="1">5-oxoprolyl-peptidase</fullName>
    </alternativeName>
    <alternativeName>
        <fullName evidence="1">Pyroglutamyl-peptidase I</fullName>
        <shortName evidence="1">PGP-I</shortName>
        <shortName evidence="1">Pyrase</shortName>
    </alternativeName>
</protein>
<evidence type="ECO:0000255" key="1">
    <source>
        <dbReference type="HAMAP-Rule" id="MF_00417"/>
    </source>
</evidence>
<proteinExistence type="inferred from homology"/>
<feature type="chain" id="PRO_0000184737" description="Pyrrolidone-carboxylate peptidase">
    <location>
        <begin position="1"/>
        <end position="212"/>
    </location>
</feature>
<feature type="active site" evidence="1">
    <location>
        <position position="78"/>
    </location>
</feature>
<feature type="active site" evidence="1">
    <location>
        <position position="141"/>
    </location>
</feature>
<feature type="active site" evidence="1">
    <location>
        <position position="165"/>
    </location>
</feature>
<reference key="1">
    <citation type="journal article" date="2002" name="Lancet">
        <title>Genome and virulence determinants of high virulence community-acquired MRSA.</title>
        <authorList>
            <person name="Baba T."/>
            <person name="Takeuchi F."/>
            <person name="Kuroda M."/>
            <person name="Yuzawa H."/>
            <person name="Aoki K."/>
            <person name="Oguchi A."/>
            <person name="Nagai Y."/>
            <person name="Iwama N."/>
            <person name="Asano K."/>
            <person name="Naimi T."/>
            <person name="Kuroda H."/>
            <person name="Cui L."/>
            <person name="Yamamoto K."/>
            <person name="Hiramatsu K."/>
        </authorList>
    </citation>
    <scope>NUCLEOTIDE SEQUENCE [LARGE SCALE GENOMIC DNA]</scope>
    <source>
        <strain>MW2</strain>
    </source>
</reference>
<organism>
    <name type="scientific">Staphylococcus aureus (strain MW2)</name>
    <dbReference type="NCBI Taxonomy" id="196620"/>
    <lineage>
        <taxon>Bacteria</taxon>
        <taxon>Bacillati</taxon>
        <taxon>Bacillota</taxon>
        <taxon>Bacilli</taxon>
        <taxon>Bacillales</taxon>
        <taxon>Staphylococcaceae</taxon>
        <taxon>Staphylococcus</taxon>
    </lineage>
</organism>
<comment type="function">
    <text evidence="1">Removes 5-oxoproline from various penultimate amino acid residues except L-proline.</text>
</comment>
<comment type="catalytic activity">
    <reaction evidence="1">
        <text>Release of an N-terminal pyroglutamyl group from a polypeptide, the second amino acid generally not being Pro.</text>
        <dbReference type="EC" id="3.4.19.3"/>
    </reaction>
</comment>
<comment type="subunit">
    <text evidence="1">Homotetramer.</text>
</comment>
<comment type="subcellular location">
    <subcellularLocation>
        <location evidence="1">Cytoplasm</location>
    </subcellularLocation>
</comment>
<comment type="similarity">
    <text evidence="1">Belongs to the peptidase C15 family.</text>
</comment>
<name>PCP_STAAW</name>
<keyword id="KW-0963">Cytoplasm</keyword>
<keyword id="KW-0378">Hydrolase</keyword>
<keyword id="KW-0645">Protease</keyword>
<keyword id="KW-0788">Thiol protease</keyword>
<accession>Q8NUH2</accession>
<gene>
    <name evidence="1" type="primary">pcp</name>
    <name type="ordered locus">MW2610</name>
</gene>